<organism>
    <name type="scientific">Levilactobacillus brevis (strain ATCC 367 / BCRC 12310 / CIP 105137 / JCM 1170 / LMG 11437 / NCIMB 947 / NCTC 947)</name>
    <name type="common">Lactobacillus brevis</name>
    <dbReference type="NCBI Taxonomy" id="387344"/>
    <lineage>
        <taxon>Bacteria</taxon>
        <taxon>Bacillati</taxon>
        <taxon>Bacillota</taxon>
        <taxon>Bacilli</taxon>
        <taxon>Lactobacillales</taxon>
        <taxon>Lactobacillaceae</taxon>
        <taxon>Levilactobacillus</taxon>
    </lineage>
</organism>
<dbReference type="EMBL" id="CP000416">
    <property type="protein sequence ID" value="ABJ64167.1"/>
    <property type="molecule type" value="Genomic_DNA"/>
</dbReference>
<dbReference type="RefSeq" id="WP_011667797.1">
    <property type="nucleotide sequence ID" value="NC_008497.1"/>
</dbReference>
<dbReference type="SMR" id="Q03RK5"/>
<dbReference type="STRING" id="387344.LVIS_1034"/>
<dbReference type="KEGG" id="lbr:LVIS_1034"/>
<dbReference type="eggNOG" id="COG0291">
    <property type="taxonomic scope" value="Bacteria"/>
</dbReference>
<dbReference type="HOGENOM" id="CLU_169643_3_1_9"/>
<dbReference type="Proteomes" id="UP000001652">
    <property type="component" value="Chromosome"/>
</dbReference>
<dbReference type="GO" id="GO:0022625">
    <property type="term" value="C:cytosolic large ribosomal subunit"/>
    <property type="evidence" value="ECO:0007669"/>
    <property type="project" value="TreeGrafter"/>
</dbReference>
<dbReference type="GO" id="GO:0003735">
    <property type="term" value="F:structural constituent of ribosome"/>
    <property type="evidence" value="ECO:0007669"/>
    <property type="project" value="InterPro"/>
</dbReference>
<dbReference type="GO" id="GO:0006412">
    <property type="term" value="P:translation"/>
    <property type="evidence" value="ECO:0007669"/>
    <property type="project" value="UniProtKB-UniRule"/>
</dbReference>
<dbReference type="FunFam" id="4.10.410.60:FF:000001">
    <property type="entry name" value="50S ribosomal protein L35"/>
    <property type="match status" value="1"/>
</dbReference>
<dbReference type="Gene3D" id="4.10.410.60">
    <property type="match status" value="1"/>
</dbReference>
<dbReference type="HAMAP" id="MF_00514">
    <property type="entry name" value="Ribosomal_bL35"/>
    <property type="match status" value="1"/>
</dbReference>
<dbReference type="InterPro" id="IPR001706">
    <property type="entry name" value="Ribosomal_bL35"/>
</dbReference>
<dbReference type="InterPro" id="IPR021137">
    <property type="entry name" value="Ribosomal_bL35-like"/>
</dbReference>
<dbReference type="InterPro" id="IPR018265">
    <property type="entry name" value="Ribosomal_bL35_CS"/>
</dbReference>
<dbReference type="InterPro" id="IPR037229">
    <property type="entry name" value="Ribosomal_bL35_sf"/>
</dbReference>
<dbReference type="NCBIfam" id="TIGR00001">
    <property type="entry name" value="rpmI_bact"/>
    <property type="match status" value="1"/>
</dbReference>
<dbReference type="PANTHER" id="PTHR33343">
    <property type="entry name" value="54S RIBOSOMAL PROTEIN BL35M"/>
    <property type="match status" value="1"/>
</dbReference>
<dbReference type="PANTHER" id="PTHR33343:SF1">
    <property type="entry name" value="LARGE RIBOSOMAL SUBUNIT PROTEIN BL35M"/>
    <property type="match status" value="1"/>
</dbReference>
<dbReference type="Pfam" id="PF01632">
    <property type="entry name" value="Ribosomal_L35p"/>
    <property type="match status" value="1"/>
</dbReference>
<dbReference type="PRINTS" id="PR00064">
    <property type="entry name" value="RIBOSOMALL35"/>
</dbReference>
<dbReference type="SUPFAM" id="SSF143034">
    <property type="entry name" value="L35p-like"/>
    <property type="match status" value="1"/>
</dbReference>
<dbReference type="PROSITE" id="PS00936">
    <property type="entry name" value="RIBOSOMAL_L35"/>
    <property type="match status" value="1"/>
</dbReference>
<reference key="1">
    <citation type="journal article" date="2006" name="Proc. Natl. Acad. Sci. U.S.A.">
        <title>Comparative genomics of the lactic acid bacteria.</title>
        <authorList>
            <person name="Makarova K.S."/>
            <person name="Slesarev A."/>
            <person name="Wolf Y.I."/>
            <person name="Sorokin A."/>
            <person name="Mirkin B."/>
            <person name="Koonin E.V."/>
            <person name="Pavlov A."/>
            <person name="Pavlova N."/>
            <person name="Karamychev V."/>
            <person name="Polouchine N."/>
            <person name="Shakhova V."/>
            <person name="Grigoriev I."/>
            <person name="Lou Y."/>
            <person name="Rohksar D."/>
            <person name="Lucas S."/>
            <person name="Huang K."/>
            <person name="Goodstein D.M."/>
            <person name="Hawkins T."/>
            <person name="Plengvidhya V."/>
            <person name="Welker D."/>
            <person name="Hughes J."/>
            <person name="Goh Y."/>
            <person name="Benson A."/>
            <person name="Baldwin K."/>
            <person name="Lee J.-H."/>
            <person name="Diaz-Muniz I."/>
            <person name="Dosti B."/>
            <person name="Smeianov V."/>
            <person name="Wechter W."/>
            <person name="Barabote R."/>
            <person name="Lorca G."/>
            <person name="Altermann E."/>
            <person name="Barrangou R."/>
            <person name="Ganesan B."/>
            <person name="Xie Y."/>
            <person name="Rawsthorne H."/>
            <person name="Tamir D."/>
            <person name="Parker C."/>
            <person name="Breidt F."/>
            <person name="Broadbent J.R."/>
            <person name="Hutkins R."/>
            <person name="O'Sullivan D."/>
            <person name="Steele J."/>
            <person name="Unlu G."/>
            <person name="Saier M.H. Jr."/>
            <person name="Klaenhammer T."/>
            <person name="Richardson P."/>
            <person name="Kozyavkin S."/>
            <person name="Weimer B.C."/>
            <person name="Mills D.A."/>
        </authorList>
    </citation>
    <scope>NUCLEOTIDE SEQUENCE [LARGE SCALE GENOMIC DNA]</scope>
    <source>
        <strain>ATCC 367 / BCRC 12310 / CIP 105137 / JCM 1170 / LMG 11437 / NCIMB 947 / NCTC 947</strain>
    </source>
</reference>
<comment type="similarity">
    <text evidence="1">Belongs to the bacterial ribosomal protein bL35 family.</text>
</comment>
<name>RL35_LEVBA</name>
<sequence>MPKMKTNRAAAKRFKVTAKGGIKSANAYTSHRFHGKTKKQRRNLRGTRMMNETTIKTYHELLQK</sequence>
<feature type="chain" id="PRO_1000050702" description="Large ribosomal subunit protein bL35">
    <location>
        <begin position="1"/>
        <end position="64"/>
    </location>
</feature>
<protein>
    <recommendedName>
        <fullName evidence="1">Large ribosomal subunit protein bL35</fullName>
    </recommendedName>
    <alternativeName>
        <fullName evidence="2">50S ribosomal protein L35</fullName>
    </alternativeName>
</protein>
<evidence type="ECO:0000255" key="1">
    <source>
        <dbReference type="HAMAP-Rule" id="MF_00514"/>
    </source>
</evidence>
<evidence type="ECO:0000305" key="2"/>
<gene>
    <name evidence="1" type="primary">rpmI</name>
    <name type="ordered locus">LVIS_1034</name>
</gene>
<proteinExistence type="inferred from homology"/>
<keyword id="KW-1185">Reference proteome</keyword>
<keyword id="KW-0687">Ribonucleoprotein</keyword>
<keyword id="KW-0689">Ribosomal protein</keyword>
<accession>Q03RK5</accession>